<protein>
    <recommendedName>
        <fullName evidence="1">Bifunctional protein FolD</fullName>
    </recommendedName>
    <domain>
        <recommendedName>
            <fullName evidence="1">Methylenetetrahydrofolate dehydrogenase</fullName>
            <ecNumber evidence="1">1.5.1.5</ecNumber>
        </recommendedName>
    </domain>
    <domain>
        <recommendedName>
            <fullName evidence="1">Methenyltetrahydrofolate cyclohydrolase</fullName>
            <ecNumber evidence="1">3.5.4.9</ecNumber>
        </recommendedName>
    </domain>
</protein>
<sequence length="285" mass="31120">MATLLNGKELSEELKQKMKIEVDELKEKGLTPHLTVILVGDNPASKSYVKGKEKACAVTGISSNLIELPENISQDELLQIIDEQNNDDSVHGILVQLPLPDQMDEQKIIHAISPAKDVDGFHPINVGKMMTGEDTFIPCTPYGILTMLRSKDISLEGKHAVIIGRSNIVGKPIGLLLLQENATVTYTHSRTKNLQEITKQADILIVAIGRAHAINADYIKEDAVVIDVGINRKDDGKLTGDVDFESAEQKASYITPVPRGVGPMTITMLLKNTIKAAKGLNDVER</sequence>
<gene>
    <name evidence="1" type="primary">folD</name>
    <name type="ordered locus">OB1880</name>
</gene>
<dbReference type="EC" id="1.5.1.5" evidence="1"/>
<dbReference type="EC" id="3.5.4.9" evidence="1"/>
<dbReference type="EMBL" id="BA000028">
    <property type="protein sequence ID" value="BAC13836.1"/>
    <property type="molecule type" value="Genomic_DNA"/>
</dbReference>
<dbReference type="RefSeq" id="WP_011066277.1">
    <property type="nucleotide sequence ID" value="NC_004193.1"/>
</dbReference>
<dbReference type="SMR" id="Q8EQ43"/>
<dbReference type="STRING" id="221109.gene:10734120"/>
<dbReference type="KEGG" id="oih:OB1880"/>
<dbReference type="eggNOG" id="COG0190">
    <property type="taxonomic scope" value="Bacteria"/>
</dbReference>
<dbReference type="HOGENOM" id="CLU_034045_2_1_9"/>
<dbReference type="OrthoDB" id="9803580at2"/>
<dbReference type="PhylomeDB" id="Q8EQ43"/>
<dbReference type="UniPathway" id="UPA00193"/>
<dbReference type="Proteomes" id="UP000000822">
    <property type="component" value="Chromosome"/>
</dbReference>
<dbReference type="GO" id="GO:0005829">
    <property type="term" value="C:cytosol"/>
    <property type="evidence" value="ECO:0007669"/>
    <property type="project" value="TreeGrafter"/>
</dbReference>
<dbReference type="GO" id="GO:0004477">
    <property type="term" value="F:methenyltetrahydrofolate cyclohydrolase activity"/>
    <property type="evidence" value="ECO:0007669"/>
    <property type="project" value="UniProtKB-UniRule"/>
</dbReference>
<dbReference type="GO" id="GO:0004488">
    <property type="term" value="F:methylenetetrahydrofolate dehydrogenase (NADP+) activity"/>
    <property type="evidence" value="ECO:0007669"/>
    <property type="project" value="UniProtKB-UniRule"/>
</dbReference>
<dbReference type="GO" id="GO:0000105">
    <property type="term" value="P:L-histidine biosynthetic process"/>
    <property type="evidence" value="ECO:0007669"/>
    <property type="project" value="UniProtKB-KW"/>
</dbReference>
<dbReference type="GO" id="GO:0009086">
    <property type="term" value="P:methionine biosynthetic process"/>
    <property type="evidence" value="ECO:0007669"/>
    <property type="project" value="UniProtKB-KW"/>
</dbReference>
<dbReference type="GO" id="GO:0006164">
    <property type="term" value="P:purine nucleotide biosynthetic process"/>
    <property type="evidence" value="ECO:0007669"/>
    <property type="project" value="UniProtKB-KW"/>
</dbReference>
<dbReference type="GO" id="GO:0035999">
    <property type="term" value="P:tetrahydrofolate interconversion"/>
    <property type="evidence" value="ECO:0007669"/>
    <property type="project" value="UniProtKB-UniRule"/>
</dbReference>
<dbReference type="CDD" id="cd01080">
    <property type="entry name" value="NAD_bind_m-THF_DH_Cyclohyd"/>
    <property type="match status" value="1"/>
</dbReference>
<dbReference type="FunFam" id="3.40.50.10860:FF:000001">
    <property type="entry name" value="Bifunctional protein FolD"/>
    <property type="match status" value="1"/>
</dbReference>
<dbReference type="FunFam" id="3.40.50.720:FF:000094">
    <property type="entry name" value="Bifunctional protein FolD"/>
    <property type="match status" value="1"/>
</dbReference>
<dbReference type="Gene3D" id="3.40.50.10860">
    <property type="entry name" value="Leucine Dehydrogenase, chain A, domain 1"/>
    <property type="match status" value="1"/>
</dbReference>
<dbReference type="Gene3D" id="3.40.50.720">
    <property type="entry name" value="NAD(P)-binding Rossmann-like Domain"/>
    <property type="match status" value="1"/>
</dbReference>
<dbReference type="HAMAP" id="MF_01576">
    <property type="entry name" value="THF_DHG_CYH"/>
    <property type="match status" value="1"/>
</dbReference>
<dbReference type="InterPro" id="IPR046346">
    <property type="entry name" value="Aminoacid_DH-like_N_sf"/>
</dbReference>
<dbReference type="InterPro" id="IPR036291">
    <property type="entry name" value="NAD(P)-bd_dom_sf"/>
</dbReference>
<dbReference type="InterPro" id="IPR000672">
    <property type="entry name" value="THF_DH/CycHdrlase"/>
</dbReference>
<dbReference type="InterPro" id="IPR020630">
    <property type="entry name" value="THF_DH/CycHdrlase_cat_dom"/>
</dbReference>
<dbReference type="InterPro" id="IPR020631">
    <property type="entry name" value="THF_DH/CycHdrlase_NAD-bd_dom"/>
</dbReference>
<dbReference type="NCBIfam" id="NF008058">
    <property type="entry name" value="PRK10792.1"/>
    <property type="match status" value="1"/>
</dbReference>
<dbReference type="NCBIfam" id="NF010783">
    <property type="entry name" value="PRK14186.1"/>
    <property type="match status" value="1"/>
</dbReference>
<dbReference type="PANTHER" id="PTHR48099:SF5">
    <property type="entry name" value="C-1-TETRAHYDROFOLATE SYNTHASE, CYTOPLASMIC"/>
    <property type="match status" value="1"/>
</dbReference>
<dbReference type="PANTHER" id="PTHR48099">
    <property type="entry name" value="C-1-TETRAHYDROFOLATE SYNTHASE, CYTOPLASMIC-RELATED"/>
    <property type="match status" value="1"/>
</dbReference>
<dbReference type="Pfam" id="PF00763">
    <property type="entry name" value="THF_DHG_CYH"/>
    <property type="match status" value="1"/>
</dbReference>
<dbReference type="Pfam" id="PF02882">
    <property type="entry name" value="THF_DHG_CYH_C"/>
    <property type="match status" value="1"/>
</dbReference>
<dbReference type="PRINTS" id="PR00085">
    <property type="entry name" value="THFDHDRGNASE"/>
</dbReference>
<dbReference type="SUPFAM" id="SSF53223">
    <property type="entry name" value="Aminoacid dehydrogenase-like, N-terminal domain"/>
    <property type="match status" value="1"/>
</dbReference>
<dbReference type="SUPFAM" id="SSF51735">
    <property type="entry name" value="NAD(P)-binding Rossmann-fold domains"/>
    <property type="match status" value="1"/>
</dbReference>
<evidence type="ECO:0000255" key="1">
    <source>
        <dbReference type="HAMAP-Rule" id="MF_01576"/>
    </source>
</evidence>
<accession>Q8EQ43</accession>
<comment type="function">
    <text evidence="1">Catalyzes the oxidation of 5,10-methylenetetrahydrofolate to 5,10-methenyltetrahydrofolate and then the hydrolysis of 5,10-methenyltetrahydrofolate to 10-formyltetrahydrofolate.</text>
</comment>
<comment type="catalytic activity">
    <reaction evidence="1">
        <text>(6R)-5,10-methylene-5,6,7,8-tetrahydrofolate + NADP(+) = (6R)-5,10-methenyltetrahydrofolate + NADPH</text>
        <dbReference type="Rhea" id="RHEA:22812"/>
        <dbReference type="ChEBI" id="CHEBI:15636"/>
        <dbReference type="ChEBI" id="CHEBI:57455"/>
        <dbReference type="ChEBI" id="CHEBI:57783"/>
        <dbReference type="ChEBI" id="CHEBI:58349"/>
        <dbReference type="EC" id="1.5.1.5"/>
    </reaction>
</comment>
<comment type="catalytic activity">
    <reaction evidence="1">
        <text>(6R)-5,10-methenyltetrahydrofolate + H2O = (6R)-10-formyltetrahydrofolate + H(+)</text>
        <dbReference type="Rhea" id="RHEA:23700"/>
        <dbReference type="ChEBI" id="CHEBI:15377"/>
        <dbReference type="ChEBI" id="CHEBI:15378"/>
        <dbReference type="ChEBI" id="CHEBI:57455"/>
        <dbReference type="ChEBI" id="CHEBI:195366"/>
        <dbReference type="EC" id="3.5.4.9"/>
    </reaction>
</comment>
<comment type="pathway">
    <text evidence="1">One-carbon metabolism; tetrahydrofolate interconversion.</text>
</comment>
<comment type="subunit">
    <text evidence="1">Homodimer.</text>
</comment>
<comment type="similarity">
    <text evidence="1">Belongs to the tetrahydrofolate dehydrogenase/cyclohydrolase family.</text>
</comment>
<reference key="1">
    <citation type="journal article" date="2002" name="Nucleic Acids Res.">
        <title>Genome sequence of Oceanobacillus iheyensis isolated from the Iheya Ridge and its unexpected adaptive capabilities to extreme environments.</title>
        <authorList>
            <person name="Takami H."/>
            <person name="Takaki Y."/>
            <person name="Uchiyama I."/>
        </authorList>
    </citation>
    <scope>NUCLEOTIDE SEQUENCE [LARGE SCALE GENOMIC DNA]</scope>
    <source>
        <strain>DSM 14371 / CIP 107618 / JCM 11309 / KCTC 3954 / HTE831</strain>
    </source>
</reference>
<keyword id="KW-0028">Amino-acid biosynthesis</keyword>
<keyword id="KW-0368">Histidine biosynthesis</keyword>
<keyword id="KW-0378">Hydrolase</keyword>
<keyword id="KW-0486">Methionine biosynthesis</keyword>
<keyword id="KW-0511">Multifunctional enzyme</keyword>
<keyword id="KW-0521">NADP</keyword>
<keyword id="KW-0554">One-carbon metabolism</keyword>
<keyword id="KW-0560">Oxidoreductase</keyword>
<keyword id="KW-0658">Purine biosynthesis</keyword>
<keyword id="KW-1185">Reference proteome</keyword>
<proteinExistence type="inferred from homology"/>
<name>FOLD_OCEIH</name>
<feature type="chain" id="PRO_0000268425" description="Bifunctional protein FolD">
    <location>
        <begin position="1"/>
        <end position="285"/>
    </location>
</feature>
<feature type="binding site" evidence="1">
    <location>
        <begin position="164"/>
        <end position="166"/>
    </location>
    <ligand>
        <name>NADP(+)</name>
        <dbReference type="ChEBI" id="CHEBI:58349"/>
    </ligand>
</feature>
<feature type="binding site" evidence="1">
    <location>
        <position position="189"/>
    </location>
    <ligand>
        <name>NADP(+)</name>
        <dbReference type="ChEBI" id="CHEBI:58349"/>
    </ligand>
</feature>
<feature type="binding site" evidence="1">
    <location>
        <position position="230"/>
    </location>
    <ligand>
        <name>NADP(+)</name>
        <dbReference type="ChEBI" id="CHEBI:58349"/>
    </ligand>
</feature>
<organism>
    <name type="scientific">Oceanobacillus iheyensis (strain DSM 14371 / CIP 107618 / JCM 11309 / KCTC 3954 / HTE831)</name>
    <dbReference type="NCBI Taxonomy" id="221109"/>
    <lineage>
        <taxon>Bacteria</taxon>
        <taxon>Bacillati</taxon>
        <taxon>Bacillota</taxon>
        <taxon>Bacilli</taxon>
        <taxon>Bacillales</taxon>
        <taxon>Bacillaceae</taxon>
        <taxon>Oceanobacillus</taxon>
    </lineage>
</organism>